<evidence type="ECO:0000255" key="1">
    <source>
        <dbReference type="PROSITE-ProRule" id="PRU00238"/>
    </source>
</evidence>
<gene>
    <name type="primary">HBB</name>
</gene>
<accession>P14524</accession>
<keyword id="KW-0903">Direct protein sequencing</keyword>
<keyword id="KW-0349">Heme</keyword>
<keyword id="KW-0408">Iron</keyword>
<keyword id="KW-0479">Metal-binding</keyword>
<keyword id="KW-0561">Oxygen transport</keyword>
<keyword id="KW-0813">Transport</keyword>
<name>HBB_TURME</name>
<reference key="1">
    <citation type="journal article" date="1989" name="Biol. Chem. Hoppe-Seyler">
        <title>The hemoglobins of the adult blackbird (Turdus merula, Passeriformes). The sequence of the major (HbA) and minor component (HbD).</title>
        <authorList>
            <person name="Nothum R."/>
            <person name="Braunitzer G."/>
            <person name="Hiebl I."/>
            <person name="Kosters J."/>
            <person name="Schneeganss D."/>
        </authorList>
    </citation>
    <scope>PROTEIN SEQUENCE</scope>
</reference>
<feature type="chain" id="PRO_0000053143" description="Hemoglobin subunit beta">
    <location>
        <begin position="1"/>
        <end position="146"/>
    </location>
</feature>
<feature type="domain" description="Globin" evidence="1">
    <location>
        <begin position="2"/>
        <end position="146"/>
    </location>
</feature>
<feature type="binding site" description="distal binding residue">
    <location>
        <position position="63"/>
    </location>
    <ligand>
        <name>heme b</name>
        <dbReference type="ChEBI" id="CHEBI:60344"/>
    </ligand>
    <ligandPart>
        <name>Fe</name>
        <dbReference type="ChEBI" id="CHEBI:18248"/>
    </ligandPart>
</feature>
<feature type="binding site" description="proximal binding residue">
    <location>
        <position position="92"/>
    </location>
    <ligand>
        <name>heme b</name>
        <dbReference type="ChEBI" id="CHEBI:60344"/>
    </ligand>
    <ligandPart>
        <name>Fe</name>
        <dbReference type="ChEBI" id="CHEBI:18248"/>
    </ligandPart>
</feature>
<dbReference type="PIR" id="S04001">
    <property type="entry name" value="HBHTB"/>
</dbReference>
<dbReference type="SMR" id="P14524"/>
<dbReference type="GO" id="GO:0072562">
    <property type="term" value="C:blood microparticle"/>
    <property type="evidence" value="ECO:0007669"/>
    <property type="project" value="TreeGrafter"/>
</dbReference>
<dbReference type="GO" id="GO:0031838">
    <property type="term" value="C:haptoglobin-hemoglobin complex"/>
    <property type="evidence" value="ECO:0007669"/>
    <property type="project" value="TreeGrafter"/>
</dbReference>
<dbReference type="GO" id="GO:0005833">
    <property type="term" value="C:hemoglobin complex"/>
    <property type="evidence" value="ECO:0007669"/>
    <property type="project" value="InterPro"/>
</dbReference>
<dbReference type="GO" id="GO:0031720">
    <property type="term" value="F:haptoglobin binding"/>
    <property type="evidence" value="ECO:0007669"/>
    <property type="project" value="TreeGrafter"/>
</dbReference>
<dbReference type="GO" id="GO:0020037">
    <property type="term" value="F:heme binding"/>
    <property type="evidence" value="ECO:0007669"/>
    <property type="project" value="InterPro"/>
</dbReference>
<dbReference type="GO" id="GO:0046872">
    <property type="term" value="F:metal ion binding"/>
    <property type="evidence" value="ECO:0007669"/>
    <property type="project" value="UniProtKB-KW"/>
</dbReference>
<dbReference type="GO" id="GO:0043177">
    <property type="term" value="F:organic acid binding"/>
    <property type="evidence" value="ECO:0007669"/>
    <property type="project" value="TreeGrafter"/>
</dbReference>
<dbReference type="GO" id="GO:0019825">
    <property type="term" value="F:oxygen binding"/>
    <property type="evidence" value="ECO:0007669"/>
    <property type="project" value="InterPro"/>
</dbReference>
<dbReference type="GO" id="GO:0005344">
    <property type="term" value="F:oxygen carrier activity"/>
    <property type="evidence" value="ECO:0007669"/>
    <property type="project" value="UniProtKB-KW"/>
</dbReference>
<dbReference type="GO" id="GO:0004601">
    <property type="term" value="F:peroxidase activity"/>
    <property type="evidence" value="ECO:0007669"/>
    <property type="project" value="TreeGrafter"/>
</dbReference>
<dbReference type="GO" id="GO:0042744">
    <property type="term" value="P:hydrogen peroxide catabolic process"/>
    <property type="evidence" value="ECO:0007669"/>
    <property type="project" value="TreeGrafter"/>
</dbReference>
<dbReference type="CDD" id="cd08925">
    <property type="entry name" value="Hb-beta-like"/>
    <property type="match status" value="1"/>
</dbReference>
<dbReference type="FunFam" id="1.10.490.10:FF:000001">
    <property type="entry name" value="Hemoglobin subunit beta"/>
    <property type="match status" value="1"/>
</dbReference>
<dbReference type="Gene3D" id="1.10.490.10">
    <property type="entry name" value="Globins"/>
    <property type="match status" value="1"/>
</dbReference>
<dbReference type="InterPro" id="IPR000971">
    <property type="entry name" value="Globin"/>
</dbReference>
<dbReference type="InterPro" id="IPR009050">
    <property type="entry name" value="Globin-like_sf"/>
</dbReference>
<dbReference type="InterPro" id="IPR012292">
    <property type="entry name" value="Globin/Proto"/>
</dbReference>
<dbReference type="InterPro" id="IPR002337">
    <property type="entry name" value="Hemoglobin_b"/>
</dbReference>
<dbReference type="InterPro" id="IPR050056">
    <property type="entry name" value="Hemoglobin_oxygen_transport"/>
</dbReference>
<dbReference type="PANTHER" id="PTHR11442">
    <property type="entry name" value="HEMOGLOBIN FAMILY MEMBER"/>
    <property type="match status" value="1"/>
</dbReference>
<dbReference type="PANTHER" id="PTHR11442:SF7">
    <property type="entry name" value="HEMOGLOBIN SUBUNIT EPSILON"/>
    <property type="match status" value="1"/>
</dbReference>
<dbReference type="Pfam" id="PF00042">
    <property type="entry name" value="Globin"/>
    <property type="match status" value="1"/>
</dbReference>
<dbReference type="PRINTS" id="PR00814">
    <property type="entry name" value="BETAHAEM"/>
</dbReference>
<dbReference type="SUPFAM" id="SSF46458">
    <property type="entry name" value="Globin-like"/>
    <property type="match status" value="1"/>
</dbReference>
<dbReference type="PROSITE" id="PS01033">
    <property type="entry name" value="GLOBIN"/>
    <property type="match status" value="1"/>
</dbReference>
<protein>
    <recommendedName>
        <fullName>Hemoglobin subunit beta</fullName>
    </recommendedName>
    <alternativeName>
        <fullName>Beta-globin</fullName>
    </alternativeName>
    <alternativeName>
        <fullName>Hemoglobin beta chain</fullName>
    </alternativeName>
</protein>
<sequence>VQWTAEEKQLITGLWGKVNVAECGGEALARLLIVYPWTQRFFASFGNLSSPTAVLGNPKVQAHGKKVLTSFGEAVKNLDSIKGTFAQLSELHCDKLHVDPENFRLLGDILVVVLAAHFGKDFTPDCQAAWQKLVRVVAHALARKYH</sequence>
<organism>
    <name type="scientific">Turdus merula</name>
    <name type="common">Common blackbird</name>
    <dbReference type="NCBI Taxonomy" id="9187"/>
    <lineage>
        <taxon>Eukaryota</taxon>
        <taxon>Metazoa</taxon>
        <taxon>Chordata</taxon>
        <taxon>Craniata</taxon>
        <taxon>Vertebrata</taxon>
        <taxon>Euteleostomi</taxon>
        <taxon>Archelosauria</taxon>
        <taxon>Archosauria</taxon>
        <taxon>Dinosauria</taxon>
        <taxon>Saurischia</taxon>
        <taxon>Theropoda</taxon>
        <taxon>Coelurosauria</taxon>
        <taxon>Aves</taxon>
        <taxon>Neognathae</taxon>
        <taxon>Neoaves</taxon>
        <taxon>Telluraves</taxon>
        <taxon>Australaves</taxon>
        <taxon>Passeriformes</taxon>
        <taxon>Turdidae</taxon>
        <taxon>Turdus</taxon>
    </lineage>
</organism>
<proteinExistence type="evidence at protein level"/>
<comment type="function">
    <text>Involved in oxygen transport from the lung to the various peripheral tissues.</text>
</comment>
<comment type="subunit">
    <text>Heterotetramer of two alpha chains and two beta chains.</text>
</comment>
<comment type="tissue specificity">
    <text>Red blood cells.</text>
</comment>
<comment type="similarity">
    <text evidence="1">Belongs to the globin family.</text>
</comment>